<name>SEPF_AGARV</name>
<protein>
    <recommendedName>
        <fullName evidence="1">Cell division protein SepF</fullName>
    </recommendedName>
</protein>
<dbReference type="EMBL" id="CP001107">
    <property type="protein sequence ID" value="ACR75477.1"/>
    <property type="molecule type" value="Genomic_DNA"/>
</dbReference>
<dbReference type="RefSeq" id="WP_012742575.1">
    <property type="nucleotide sequence ID" value="NC_012781.1"/>
</dbReference>
<dbReference type="SMR" id="C4ZA36"/>
<dbReference type="STRING" id="515619.EUBREC_1733"/>
<dbReference type="PaxDb" id="515619-EUBREC_1733"/>
<dbReference type="GeneID" id="86988532"/>
<dbReference type="KEGG" id="ere:EUBREC_1733"/>
<dbReference type="HOGENOM" id="CLU_078499_4_0_9"/>
<dbReference type="Proteomes" id="UP000001477">
    <property type="component" value="Chromosome"/>
</dbReference>
<dbReference type="GO" id="GO:0005737">
    <property type="term" value="C:cytoplasm"/>
    <property type="evidence" value="ECO:0007669"/>
    <property type="project" value="UniProtKB-SubCell"/>
</dbReference>
<dbReference type="GO" id="GO:0000917">
    <property type="term" value="P:division septum assembly"/>
    <property type="evidence" value="ECO:0007669"/>
    <property type="project" value="UniProtKB-KW"/>
</dbReference>
<dbReference type="GO" id="GO:0043093">
    <property type="term" value="P:FtsZ-dependent cytokinesis"/>
    <property type="evidence" value="ECO:0007669"/>
    <property type="project" value="UniProtKB-UniRule"/>
</dbReference>
<dbReference type="Gene3D" id="3.30.110.150">
    <property type="entry name" value="SepF-like protein"/>
    <property type="match status" value="1"/>
</dbReference>
<dbReference type="HAMAP" id="MF_01197">
    <property type="entry name" value="SepF"/>
    <property type="match status" value="1"/>
</dbReference>
<dbReference type="InterPro" id="IPR023052">
    <property type="entry name" value="Cell_div_SepF"/>
</dbReference>
<dbReference type="InterPro" id="IPR007561">
    <property type="entry name" value="Cell_div_SepF/SepF-rel"/>
</dbReference>
<dbReference type="InterPro" id="IPR038594">
    <property type="entry name" value="SepF-like_sf"/>
</dbReference>
<dbReference type="PANTHER" id="PTHR35798">
    <property type="entry name" value="CELL DIVISION PROTEIN SEPF"/>
    <property type="match status" value="1"/>
</dbReference>
<dbReference type="PANTHER" id="PTHR35798:SF1">
    <property type="entry name" value="CELL DIVISION PROTEIN SEPF"/>
    <property type="match status" value="1"/>
</dbReference>
<dbReference type="Pfam" id="PF04472">
    <property type="entry name" value="SepF"/>
    <property type="match status" value="1"/>
</dbReference>
<proteinExistence type="inferred from homology"/>
<feature type="chain" id="PRO_1000213809" description="Cell division protein SepF">
    <location>
        <begin position="1"/>
        <end position="180"/>
    </location>
</feature>
<feature type="region of interest" description="Disordered" evidence="2">
    <location>
        <begin position="14"/>
        <end position="81"/>
    </location>
</feature>
<feature type="compositionally biased region" description="Acidic residues" evidence="2">
    <location>
        <begin position="15"/>
        <end position="35"/>
    </location>
</feature>
<feature type="compositionally biased region" description="Basic and acidic residues" evidence="2">
    <location>
        <begin position="57"/>
        <end position="68"/>
    </location>
</feature>
<feature type="compositionally biased region" description="Low complexity" evidence="2">
    <location>
        <begin position="69"/>
        <end position="79"/>
    </location>
</feature>
<sequence length="180" mass="20302">MSFIDKILDKMSLNSEDDEEFDNEDYYLDDEEEEELPRNPFRRKKEAVEEETAIKSTRRDTTPKEKPVKTTSKITPISKSSRKQVASDMEVCVIKPSSIEDEIEITDTLLNGRTVVINMEGLNVDVAQRIIDFTSGSAYALHGNLQKISNFIFIATPHGVDISGDIQSLMDSFDLPGSSY</sequence>
<gene>
    <name evidence="1" type="primary">sepF</name>
    <name type="ordered locus">EUBREC_1733</name>
</gene>
<organism>
    <name type="scientific">Agathobacter rectalis (strain ATCC 33656 / DSM 3377 / JCM 17463 / KCTC 5835 / VPI 0990)</name>
    <name type="common">Eubacterium rectale</name>
    <dbReference type="NCBI Taxonomy" id="515619"/>
    <lineage>
        <taxon>Bacteria</taxon>
        <taxon>Bacillati</taxon>
        <taxon>Bacillota</taxon>
        <taxon>Clostridia</taxon>
        <taxon>Lachnospirales</taxon>
        <taxon>Lachnospiraceae</taxon>
        <taxon>Agathobacter</taxon>
    </lineage>
</organism>
<reference key="1">
    <citation type="journal article" date="2009" name="Proc. Natl. Acad. Sci. U.S.A.">
        <title>Characterizing a model human gut microbiota composed of members of its two dominant bacterial phyla.</title>
        <authorList>
            <person name="Mahowald M.A."/>
            <person name="Rey F.E."/>
            <person name="Seedorf H."/>
            <person name="Turnbaugh P.J."/>
            <person name="Fulton R.S."/>
            <person name="Wollam A."/>
            <person name="Shah N."/>
            <person name="Wang C."/>
            <person name="Magrini V."/>
            <person name="Wilson R.K."/>
            <person name="Cantarel B.L."/>
            <person name="Coutinho P.M."/>
            <person name="Henrissat B."/>
            <person name="Crock L.W."/>
            <person name="Russell A."/>
            <person name="Verberkmoes N.C."/>
            <person name="Hettich R.L."/>
            <person name="Gordon J.I."/>
        </authorList>
    </citation>
    <scope>NUCLEOTIDE SEQUENCE [LARGE SCALE GENOMIC DNA]</scope>
    <source>
        <strain>ATCC 33656 / DSM 3377 / JCM 17463 / KCTC 5835 / LMG 30912 / VPI 0990</strain>
    </source>
</reference>
<evidence type="ECO:0000255" key="1">
    <source>
        <dbReference type="HAMAP-Rule" id="MF_01197"/>
    </source>
</evidence>
<evidence type="ECO:0000256" key="2">
    <source>
        <dbReference type="SAM" id="MobiDB-lite"/>
    </source>
</evidence>
<accession>C4ZA36</accession>
<comment type="function">
    <text evidence="1">Cell division protein that is part of the divisome complex and is recruited early to the Z-ring. Probably stimulates Z-ring formation, perhaps through the cross-linking of FtsZ protofilaments. Its function overlaps with FtsA.</text>
</comment>
<comment type="subunit">
    <text evidence="1">Homodimer. Interacts with FtsZ.</text>
</comment>
<comment type="subcellular location">
    <subcellularLocation>
        <location evidence="1">Cytoplasm</location>
    </subcellularLocation>
    <text evidence="1">Localizes to the division site, in a FtsZ-dependent manner.</text>
</comment>
<comment type="similarity">
    <text evidence="1">Belongs to the SepF family.</text>
</comment>
<keyword id="KW-0131">Cell cycle</keyword>
<keyword id="KW-0132">Cell division</keyword>
<keyword id="KW-0963">Cytoplasm</keyword>
<keyword id="KW-0717">Septation</keyword>